<gene>
    <name evidence="1" type="primary">valS</name>
    <name type="ordered locus">PMM1682</name>
</gene>
<accession>Q7UZI3</accession>
<proteinExistence type="inferred from homology"/>
<evidence type="ECO:0000255" key="1">
    <source>
        <dbReference type="HAMAP-Rule" id="MF_02004"/>
    </source>
</evidence>
<dbReference type="EC" id="6.1.1.9" evidence="1"/>
<dbReference type="EMBL" id="BX548174">
    <property type="protein sequence ID" value="CAE20141.1"/>
    <property type="molecule type" value="Genomic_DNA"/>
</dbReference>
<dbReference type="RefSeq" id="WP_011133309.1">
    <property type="nucleotide sequence ID" value="NC_005072.1"/>
</dbReference>
<dbReference type="SMR" id="Q7UZI3"/>
<dbReference type="STRING" id="59919.PMM1682"/>
<dbReference type="KEGG" id="pmm:PMM1682"/>
<dbReference type="eggNOG" id="COG0525">
    <property type="taxonomic scope" value="Bacteria"/>
</dbReference>
<dbReference type="HOGENOM" id="CLU_001493_0_2_3"/>
<dbReference type="OrthoDB" id="9810365at2"/>
<dbReference type="Proteomes" id="UP000001026">
    <property type="component" value="Chromosome"/>
</dbReference>
<dbReference type="GO" id="GO:0005829">
    <property type="term" value="C:cytosol"/>
    <property type="evidence" value="ECO:0007669"/>
    <property type="project" value="TreeGrafter"/>
</dbReference>
<dbReference type="GO" id="GO:0002161">
    <property type="term" value="F:aminoacyl-tRNA deacylase activity"/>
    <property type="evidence" value="ECO:0007669"/>
    <property type="project" value="InterPro"/>
</dbReference>
<dbReference type="GO" id="GO:0005524">
    <property type="term" value="F:ATP binding"/>
    <property type="evidence" value="ECO:0007669"/>
    <property type="project" value="UniProtKB-UniRule"/>
</dbReference>
<dbReference type="GO" id="GO:0004832">
    <property type="term" value="F:valine-tRNA ligase activity"/>
    <property type="evidence" value="ECO:0007669"/>
    <property type="project" value="UniProtKB-UniRule"/>
</dbReference>
<dbReference type="GO" id="GO:0006438">
    <property type="term" value="P:valyl-tRNA aminoacylation"/>
    <property type="evidence" value="ECO:0007669"/>
    <property type="project" value="UniProtKB-UniRule"/>
</dbReference>
<dbReference type="CDD" id="cd07962">
    <property type="entry name" value="Anticodon_Ia_Val"/>
    <property type="match status" value="1"/>
</dbReference>
<dbReference type="CDD" id="cd00817">
    <property type="entry name" value="ValRS_core"/>
    <property type="match status" value="1"/>
</dbReference>
<dbReference type="FunFam" id="3.40.50.620:FF:000032">
    <property type="entry name" value="Valine--tRNA ligase"/>
    <property type="match status" value="1"/>
</dbReference>
<dbReference type="FunFam" id="3.40.50.620:FF:000078">
    <property type="entry name" value="Valine--tRNA ligase, mitochondrial"/>
    <property type="match status" value="1"/>
</dbReference>
<dbReference type="Gene3D" id="3.40.50.620">
    <property type="entry name" value="HUPs"/>
    <property type="match status" value="2"/>
</dbReference>
<dbReference type="Gene3D" id="1.10.730.10">
    <property type="entry name" value="Isoleucyl-tRNA Synthetase, Domain 1"/>
    <property type="match status" value="1"/>
</dbReference>
<dbReference type="Gene3D" id="1.10.287.380">
    <property type="entry name" value="Valyl-tRNA synthetase, C-terminal domain"/>
    <property type="match status" value="1"/>
</dbReference>
<dbReference type="Gene3D" id="3.90.740.10">
    <property type="entry name" value="Valyl/Leucyl/Isoleucyl-tRNA synthetase, editing domain"/>
    <property type="match status" value="1"/>
</dbReference>
<dbReference type="HAMAP" id="MF_02004">
    <property type="entry name" value="Val_tRNA_synth_type1"/>
    <property type="match status" value="1"/>
</dbReference>
<dbReference type="InterPro" id="IPR001412">
    <property type="entry name" value="aa-tRNA-synth_I_CS"/>
</dbReference>
<dbReference type="InterPro" id="IPR002300">
    <property type="entry name" value="aa-tRNA-synth_Ia"/>
</dbReference>
<dbReference type="InterPro" id="IPR033705">
    <property type="entry name" value="Anticodon_Ia_Val"/>
</dbReference>
<dbReference type="InterPro" id="IPR013155">
    <property type="entry name" value="M/V/L/I-tRNA-synth_anticd-bd"/>
</dbReference>
<dbReference type="InterPro" id="IPR014729">
    <property type="entry name" value="Rossmann-like_a/b/a_fold"/>
</dbReference>
<dbReference type="InterPro" id="IPR010978">
    <property type="entry name" value="tRNA-bd_arm"/>
</dbReference>
<dbReference type="InterPro" id="IPR009080">
    <property type="entry name" value="tRNAsynth_Ia_anticodon-bd"/>
</dbReference>
<dbReference type="InterPro" id="IPR037118">
    <property type="entry name" value="Val-tRNA_synth_C_sf"/>
</dbReference>
<dbReference type="InterPro" id="IPR019499">
    <property type="entry name" value="Val-tRNA_synth_tRNA-bd"/>
</dbReference>
<dbReference type="InterPro" id="IPR009008">
    <property type="entry name" value="Val/Leu/Ile-tRNA-synth_edit"/>
</dbReference>
<dbReference type="InterPro" id="IPR002303">
    <property type="entry name" value="Valyl-tRNA_ligase"/>
</dbReference>
<dbReference type="NCBIfam" id="NF004349">
    <property type="entry name" value="PRK05729.1"/>
    <property type="match status" value="1"/>
</dbReference>
<dbReference type="NCBIfam" id="TIGR00422">
    <property type="entry name" value="valS"/>
    <property type="match status" value="1"/>
</dbReference>
<dbReference type="PANTHER" id="PTHR11946:SF93">
    <property type="entry name" value="VALINE--TRNA LIGASE, CHLOROPLASTIC_MITOCHONDRIAL 2"/>
    <property type="match status" value="1"/>
</dbReference>
<dbReference type="PANTHER" id="PTHR11946">
    <property type="entry name" value="VALYL-TRNA SYNTHETASES"/>
    <property type="match status" value="1"/>
</dbReference>
<dbReference type="Pfam" id="PF08264">
    <property type="entry name" value="Anticodon_1"/>
    <property type="match status" value="1"/>
</dbReference>
<dbReference type="Pfam" id="PF00133">
    <property type="entry name" value="tRNA-synt_1"/>
    <property type="match status" value="1"/>
</dbReference>
<dbReference type="Pfam" id="PF10458">
    <property type="entry name" value="Val_tRNA-synt_C"/>
    <property type="match status" value="1"/>
</dbReference>
<dbReference type="PRINTS" id="PR00986">
    <property type="entry name" value="TRNASYNTHVAL"/>
</dbReference>
<dbReference type="SUPFAM" id="SSF47323">
    <property type="entry name" value="Anticodon-binding domain of a subclass of class I aminoacyl-tRNA synthetases"/>
    <property type="match status" value="1"/>
</dbReference>
<dbReference type="SUPFAM" id="SSF52374">
    <property type="entry name" value="Nucleotidylyl transferase"/>
    <property type="match status" value="1"/>
</dbReference>
<dbReference type="SUPFAM" id="SSF46589">
    <property type="entry name" value="tRNA-binding arm"/>
    <property type="match status" value="1"/>
</dbReference>
<dbReference type="SUPFAM" id="SSF50677">
    <property type="entry name" value="ValRS/IleRS/LeuRS editing domain"/>
    <property type="match status" value="1"/>
</dbReference>
<dbReference type="PROSITE" id="PS00178">
    <property type="entry name" value="AA_TRNA_LIGASE_I"/>
    <property type="match status" value="1"/>
</dbReference>
<feature type="chain" id="PRO_0000224533" description="Valine--tRNA ligase">
    <location>
        <begin position="1"/>
        <end position="918"/>
    </location>
</feature>
<feature type="coiled-coil region" evidence="1">
    <location>
        <begin position="849"/>
        <end position="883"/>
    </location>
</feature>
<feature type="short sequence motif" description="'HIGH' region">
    <location>
        <begin position="50"/>
        <end position="60"/>
    </location>
</feature>
<feature type="short sequence motif" description="'KMSKS' region">
    <location>
        <begin position="548"/>
        <end position="552"/>
    </location>
</feature>
<feature type="binding site" evidence="1">
    <location>
        <position position="551"/>
    </location>
    <ligand>
        <name>ATP</name>
        <dbReference type="ChEBI" id="CHEBI:30616"/>
    </ligand>
</feature>
<comment type="function">
    <text evidence="1">Catalyzes the attachment of valine to tRNA(Val). As ValRS can inadvertently accommodate and process structurally similar amino acids such as threonine, to avoid such errors, it has a 'posttransfer' editing activity that hydrolyzes mischarged Thr-tRNA(Val) in a tRNA-dependent manner.</text>
</comment>
<comment type="catalytic activity">
    <reaction evidence="1">
        <text>tRNA(Val) + L-valine + ATP = L-valyl-tRNA(Val) + AMP + diphosphate</text>
        <dbReference type="Rhea" id="RHEA:10704"/>
        <dbReference type="Rhea" id="RHEA-COMP:9672"/>
        <dbReference type="Rhea" id="RHEA-COMP:9708"/>
        <dbReference type="ChEBI" id="CHEBI:30616"/>
        <dbReference type="ChEBI" id="CHEBI:33019"/>
        <dbReference type="ChEBI" id="CHEBI:57762"/>
        <dbReference type="ChEBI" id="CHEBI:78442"/>
        <dbReference type="ChEBI" id="CHEBI:78537"/>
        <dbReference type="ChEBI" id="CHEBI:456215"/>
        <dbReference type="EC" id="6.1.1.9"/>
    </reaction>
</comment>
<comment type="subunit">
    <text evidence="1">Monomer.</text>
</comment>
<comment type="subcellular location">
    <subcellularLocation>
        <location evidence="1">Cytoplasm</location>
    </subcellularLocation>
</comment>
<comment type="domain">
    <text evidence="1">ValRS has two distinct active sites: one for aminoacylation and one for editing. The misactivated threonine is translocated from the active site to the editing site.</text>
</comment>
<comment type="domain">
    <text evidence="1">The C-terminal coiled-coil domain is crucial for aminoacylation activity.</text>
</comment>
<comment type="similarity">
    <text evidence="1">Belongs to the class-I aminoacyl-tRNA synthetase family. ValS type 1 subfamily.</text>
</comment>
<keyword id="KW-0030">Aminoacyl-tRNA synthetase</keyword>
<keyword id="KW-0067">ATP-binding</keyword>
<keyword id="KW-0175">Coiled coil</keyword>
<keyword id="KW-0963">Cytoplasm</keyword>
<keyword id="KW-0436">Ligase</keyword>
<keyword id="KW-0547">Nucleotide-binding</keyword>
<keyword id="KW-0648">Protein biosynthesis</keyword>
<sequence length="918" mass="106312">MNESNDELTLNNYLPSQVEQKWQKRWDSLRAFSPNPSDNGDPFCIVIPPPNVTGSLHMGHAFNTALIDVIIRFQRLLGKNVLCLPGTDHASIAVQTILEKQLKTEGKNSEDIGREEFLKRAWIWKEQSGGKIISQLKRIGYSVDWERERFTLDEKLNEAVVEAFNILHEKKLIYRGEYLVNWCPASQSAVSDLEVEMQEVNGYLWHFKYPLISDQGQILDKYLEVATTRPETLLGDTALAVNPNDERYKKYIDKKVKVPFVDREIPVISDIHVDKDFGTGCVKVTPAHDPNDFAIGKRNNLKQINIMNKDGTLNINAGKFQDLDRFDARKKIIKELDTLGLLTKIENYKNTVPFSDRGKVPIEPLLSTQWFLKMDNISSSCLKELDSKKPTFIPQRWEKVYKDWLDNINDWCISRQLWWGHQIPAWYVLKQSEDSIDQNTPYVVARNEKEALSKATKEFGSNLQLIRDKDVLDTWFSSGLWPFSTLGWPNINDADFKKWYPNSVLITGFDIIFFWVARMTMMGKTFTNNIPFKDVYIHGLVRDENNKKMSKSSGNGIDPLLLIDKYGSDALRFALLREVAGAGQDIRLDYDRKENTSSTVEASRNFANKLWNATKFVLINKTFSENCSLNESDEKNLELSDKWILSKLNQLNTKVSNLLIEYKLGESAKLLYEFAWNDFCDWYVEFAKQKFNNKETHNRKISEKILIKVLTDVLVMMHPFMPHITEELWHKLQIKPEQILLSLQKWPVLEKKYINSQIDKSFHELFEIIRLIRNLRVELGLKPSQLVPVYLISDNVELTNFLKTLIVDIKTFTKSSEVIICKSKDIDKNNFAQSFSGIIGDLEVYLPFNDFVNLEALKDRLTKDLKKVNSDIETLNKRISNKNFIDKAPKEIVDECFAKLKEGNLQSEIINKKLKLLK</sequence>
<name>SYV_PROMP</name>
<organism>
    <name type="scientific">Prochlorococcus marinus subsp. pastoris (strain CCMP1986 / NIES-2087 / MED4)</name>
    <dbReference type="NCBI Taxonomy" id="59919"/>
    <lineage>
        <taxon>Bacteria</taxon>
        <taxon>Bacillati</taxon>
        <taxon>Cyanobacteriota</taxon>
        <taxon>Cyanophyceae</taxon>
        <taxon>Synechococcales</taxon>
        <taxon>Prochlorococcaceae</taxon>
        <taxon>Prochlorococcus</taxon>
    </lineage>
</organism>
<protein>
    <recommendedName>
        <fullName evidence="1">Valine--tRNA ligase</fullName>
        <ecNumber evidence="1">6.1.1.9</ecNumber>
    </recommendedName>
    <alternativeName>
        <fullName evidence="1">Valyl-tRNA synthetase</fullName>
        <shortName evidence="1">ValRS</shortName>
    </alternativeName>
</protein>
<reference key="1">
    <citation type="journal article" date="2003" name="Nature">
        <title>Genome divergence in two Prochlorococcus ecotypes reflects oceanic niche differentiation.</title>
        <authorList>
            <person name="Rocap G."/>
            <person name="Larimer F.W."/>
            <person name="Lamerdin J.E."/>
            <person name="Malfatti S."/>
            <person name="Chain P."/>
            <person name="Ahlgren N.A."/>
            <person name="Arellano A."/>
            <person name="Coleman M."/>
            <person name="Hauser L."/>
            <person name="Hess W.R."/>
            <person name="Johnson Z.I."/>
            <person name="Land M.L."/>
            <person name="Lindell D."/>
            <person name="Post A.F."/>
            <person name="Regala W."/>
            <person name="Shah M."/>
            <person name="Shaw S.L."/>
            <person name="Steglich C."/>
            <person name="Sullivan M.B."/>
            <person name="Ting C.S."/>
            <person name="Tolonen A."/>
            <person name="Webb E.A."/>
            <person name="Zinser E.R."/>
            <person name="Chisholm S.W."/>
        </authorList>
    </citation>
    <scope>NUCLEOTIDE SEQUENCE [LARGE SCALE GENOMIC DNA]</scope>
    <source>
        <strain>CCMP1986 / NIES-2087 / MED4</strain>
    </source>
</reference>